<sequence>MDRISSLSNDIISNIVSFLSAKDAAVASVLSKRWQNIYTIVPNLEFDNTLENQGSLTDFLNGLLALPASTRIKNVSIKRRGRDGPNRDADLNRFLCNVLKRGVLKLKLDIWVTLDGRYSLPVEVFTCKTLVELELGSILQIDLVPENALLPALKTLIIDAVQFSDQSGCAFQKLLSSCPVLVELRMLNVQWEHWQWSRRVSSPTLEKLTMNHRYHFGNTYYDMEGITFDTPSLTSLKYYDLPPKSYPTVNLDSLVEATISLTLPLHHAWTGKHARRGDTVPSVTNLIKGLRNVETLNLSSTDTVAAFYFSNEAIPVFENLHRLSIATEREFCWRTLPYLLKKSPNLESLVIGGPLHYNYQLGDGYESEEIYSEDDDEEESESDDDEPICECLSDYSFLESCLVKTVEISEYSGTKIELKHMKHFLEKLSCLELVKVFSHERDEEEHVQLRTNLLNLPRSSKCKTQFEFIPPRSSV</sequence>
<organism>
    <name type="scientific">Arabidopsis thaliana</name>
    <name type="common">Mouse-ear cress</name>
    <dbReference type="NCBI Taxonomy" id="3702"/>
    <lineage>
        <taxon>Eukaryota</taxon>
        <taxon>Viridiplantae</taxon>
        <taxon>Streptophyta</taxon>
        <taxon>Embryophyta</taxon>
        <taxon>Tracheophyta</taxon>
        <taxon>Spermatophyta</taxon>
        <taxon>Magnoliopsida</taxon>
        <taxon>eudicotyledons</taxon>
        <taxon>Gunneridae</taxon>
        <taxon>Pentapetalae</taxon>
        <taxon>rosids</taxon>
        <taxon>malvids</taxon>
        <taxon>Brassicales</taxon>
        <taxon>Brassicaceae</taxon>
        <taxon>Camelineae</taxon>
        <taxon>Arabidopsis</taxon>
    </lineage>
</organism>
<reference key="1">
    <citation type="journal article" date="2000" name="Nature">
        <title>Sequence and analysis of chromosome 3 of the plant Arabidopsis thaliana.</title>
        <authorList>
            <person name="Salanoubat M."/>
            <person name="Lemcke K."/>
            <person name="Rieger M."/>
            <person name="Ansorge W."/>
            <person name="Unseld M."/>
            <person name="Fartmann B."/>
            <person name="Valle G."/>
            <person name="Bloecker H."/>
            <person name="Perez-Alonso M."/>
            <person name="Obermaier B."/>
            <person name="Delseny M."/>
            <person name="Boutry M."/>
            <person name="Grivell L.A."/>
            <person name="Mache R."/>
            <person name="Puigdomenech P."/>
            <person name="De Simone V."/>
            <person name="Choisne N."/>
            <person name="Artiguenave F."/>
            <person name="Robert C."/>
            <person name="Brottier P."/>
            <person name="Wincker P."/>
            <person name="Cattolico L."/>
            <person name="Weissenbach J."/>
            <person name="Saurin W."/>
            <person name="Quetier F."/>
            <person name="Schaefer M."/>
            <person name="Mueller-Auer S."/>
            <person name="Gabel C."/>
            <person name="Fuchs M."/>
            <person name="Benes V."/>
            <person name="Wurmbach E."/>
            <person name="Drzonek H."/>
            <person name="Erfle H."/>
            <person name="Jordan N."/>
            <person name="Bangert S."/>
            <person name="Wiedelmann R."/>
            <person name="Kranz H."/>
            <person name="Voss H."/>
            <person name="Holland R."/>
            <person name="Brandt P."/>
            <person name="Nyakatura G."/>
            <person name="Vezzi A."/>
            <person name="D'Angelo M."/>
            <person name="Pallavicini A."/>
            <person name="Toppo S."/>
            <person name="Simionati B."/>
            <person name="Conrad A."/>
            <person name="Hornischer K."/>
            <person name="Kauer G."/>
            <person name="Loehnert T.-H."/>
            <person name="Nordsiek G."/>
            <person name="Reichelt J."/>
            <person name="Scharfe M."/>
            <person name="Schoen O."/>
            <person name="Bargues M."/>
            <person name="Terol J."/>
            <person name="Climent J."/>
            <person name="Navarro P."/>
            <person name="Collado C."/>
            <person name="Perez-Perez A."/>
            <person name="Ottenwaelder B."/>
            <person name="Duchemin D."/>
            <person name="Cooke R."/>
            <person name="Laudie M."/>
            <person name="Berger-Llauro C."/>
            <person name="Purnelle B."/>
            <person name="Masuy D."/>
            <person name="de Haan M."/>
            <person name="Maarse A.C."/>
            <person name="Alcaraz J.-P."/>
            <person name="Cottet A."/>
            <person name="Casacuberta E."/>
            <person name="Monfort A."/>
            <person name="Argiriou A."/>
            <person name="Flores M."/>
            <person name="Liguori R."/>
            <person name="Vitale D."/>
            <person name="Mannhaupt G."/>
            <person name="Haase D."/>
            <person name="Schoof H."/>
            <person name="Rudd S."/>
            <person name="Zaccaria P."/>
            <person name="Mewes H.-W."/>
            <person name="Mayer K.F.X."/>
            <person name="Kaul S."/>
            <person name="Town C.D."/>
            <person name="Koo H.L."/>
            <person name="Tallon L.J."/>
            <person name="Jenkins J."/>
            <person name="Rooney T."/>
            <person name="Rizzo M."/>
            <person name="Walts A."/>
            <person name="Utterback T."/>
            <person name="Fujii C.Y."/>
            <person name="Shea T.P."/>
            <person name="Creasy T.H."/>
            <person name="Haas B."/>
            <person name="Maiti R."/>
            <person name="Wu D."/>
            <person name="Peterson J."/>
            <person name="Van Aken S."/>
            <person name="Pai G."/>
            <person name="Militscher J."/>
            <person name="Sellers P."/>
            <person name="Gill J.E."/>
            <person name="Feldblyum T.V."/>
            <person name="Preuss D."/>
            <person name="Lin X."/>
            <person name="Nierman W.C."/>
            <person name="Salzberg S.L."/>
            <person name="White O."/>
            <person name="Venter J.C."/>
            <person name="Fraser C.M."/>
            <person name="Kaneko T."/>
            <person name="Nakamura Y."/>
            <person name="Sato S."/>
            <person name="Kato T."/>
            <person name="Asamizu E."/>
            <person name="Sasamoto S."/>
            <person name="Kimura T."/>
            <person name="Idesawa K."/>
            <person name="Kawashima K."/>
            <person name="Kishida Y."/>
            <person name="Kiyokawa C."/>
            <person name="Kohara M."/>
            <person name="Matsumoto M."/>
            <person name="Matsuno A."/>
            <person name="Muraki A."/>
            <person name="Nakayama S."/>
            <person name="Nakazaki N."/>
            <person name="Shinpo S."/>
            <person name="Takeuchi C."/>
            <person name="Wada T."/>
            <person name="Watanabe A."/>
            <person name="Yamada M."/>
            <person name="Yasuda M."/>
            <person name="Tabata S."/>
        </authorList>
    </citation>
    <scope>NUCLEOTIDE SEQUENCE [LARGE SCALE GENOMIC DNA]</scope>
    <source>
        <strain>cv. Columbia</strain>
    </source>
</reference>
<reference key="2">
    <citation type="journal article" date="2017" name="Plant J.">
        <title>Araport11: a complete reannotation of the Arabidopsis thaliana reference genome.</title>
        <authorList>
            <person name="Cheng C.Y."/>
            <person name="Krishnakumar V."/>
            <person name="Chan A.P."/>
            <person name="Thibaud-Nissen F."/>
            <person name="Schobel S."/>
            <person name="Town C.D."/>
        </authorList>
    </citation>
    <scope>GENOME REANNOTATION</scope>
    <source>
        <strain>cv. Columbia</strain>
    </source>
</reference>
<protein>
    <recommendedName>
        <fullName>Putative F-box protein At3g58960</fullName>
    </recommendedName>
</protein>
<keyword id="KW-1185">Reference proteome</keyword>
<feature type="chain" id="PRO_0000283480" description="Putative F-box protein At3g58960">
    <location>
        <begin position="1"/>
        <end position="475"/>
    </location>
</feature>
<feature type="domain" description="F-box">
    <location>
        <begin position="1"/>
        <end position="49"/>
    </location>
</feature>
<dbReference type="EMBL" id="AL163527">
    <property type="protein sequence ID" value="CAB86924.1"/>
    <property type="molecule type" value="Genomic_DNA"/>
</dbReference>
<dbReference type="EMBL" id="CP002686">
    <property type="protein sequence ID" value="AEE79854.1"/>
    <property type="molecule type" value="Genomic_DNA"/>
</dbReference>
<dbReference type="PIR" id="T47778">
    <property type="entry name" value="T47778"/>
</dbReference>
<dbReference type="RefSeq" id="NP_191455.1">
    <property type="nucleotide sequence ID" value="NM_115758.1"/>
</dbReference>
<dbReference type="FunCoup" id="Q9LYU0">
    <property type="interactions" value="5"/>
</dbReference>
<dbReference type="iPTMnet" id="Q9LYU0"/>
<dbReference type="PaxDb" id="3702-AT3G58960.1"/>
<dbReference type="ProteomicsDB" id="230864"/>
<dbReference type="EnsemblPlants" id="AT3G58960.1">
    <property type="protein sequence ID" value="AT3G58960.1"/>
    <property type="gene ID" value="AT3G58960"/>
</dbReference>
<dbReference type="GeneID" id="825065"/>
<dbReference type="Gramene" id="AT3G58960.1">
    <property type="protein sequence ID" value="AT3G58960.1"/>
    <property type="gene ID" value="AT3G58960"/>
</dbReference>
<dbReference type="KEGG" id="ath:AT3G58960"/>
<dbReference type="Araport" id="AT3G58960"/>
<dbReference type="TAIR" id="AT3G58960"/>
<dbReference type="HOGENOM" id="CLU_010721_7_1_1"/>
<dbReference type="InParanoid" id="Q9LYU0"/>
<dbReference type="OMA" id="LTINHRY"/>
<dbReference type="PhylomeDB" id="Q9LYU0"/>
<dbReference type="PRO" id="PR:Q9LYU0"/>
<dbReference type="Proteomes" id="UP000006548">
    <property type="component" value="Chromosome 3"/>
</dbReference>
<dbReference type="ExpressionAtlas" id="Q9LYU0">
    <property type="expression patterns" value="baseline and differential"/>
</dbReference>
<dbReference type="Gene3D" id="3.80.10.10">
    <property type="entry name" value="Ribonuclease Inhibitor"/>
    <property type="match status" value="1"/>
</dbReference>
<dbReference type="InterPro" id="IPR036047">
    <property type="entry name" value="F-box-like_dom_sf"/>
</dbReference>
<dbReference type="InterPro" id="IPR001810">
    <property type="entry name" value="F-box_dom"/>
</dbReference>
<dbReference type="InterPro" id="IPR006566">
    <property type="entry name" value="FBD"/>
</dbReference>
<dbReference type="InterPro" id="IPR055294">
    <property type="entry name" value="FBL60-like"/>
</dbReference>
<dbReference type="InterPro" id="IPR032675">
    <property type="entry name" value="LRR_dom_sf"/>
</dbReference>
<dbReference type="InterPro" id="IPR055411">
    <property type="entry name" value="LRR_FXL15/At3g58940/PEG3-like"/>
</dbReference>
<dbReference type="PANTHER" id="PTHR31293">
    <property type="entry name" value="RNI-LIKE SUPERFAMILY PROTEIN"/>
    <property type="match status" value="1"/>
</dbReference>
<dbReference type="PANTHER" id="PTHR31293:SF12">
    <property type="entry name" value="RNI-LIKE SUPERFAMILY PROTEIN"/>
    <property type="match status" value="1"/>
</dbReference>
<dbReference type="Pfam" id="PF00646">
    <property type="entry name" value="F-box"/>
    <property type="match status" value="1"/>
</dbReference>
<dbReference type="Pfam" id="PF24758">
    <property type="entry name" value="LRR_At5g56370"/>
    <property type="match status" value="1"/>
</dbReference>
<dbReference type="SMART" id="SM00579">
    <property type="entry name" value="FBD"/>
    <property type="match status" value="1"/>
</dbReference>
<dbReference type="SUPFAM" id="SSF81383">
    <property type="entry name" value="F-box domain"/>
    <property type="match status" value="1"/>
</dbReference>
<dbReference type="SUPFAM" id="SSF52047">
    <property type="entry name" value="RNI-like"/>
    <property type="match status" value="1"/>
</dbReference>
<name>FB210_ARATH</name>
<accession>Q9LYU0</accession>
<gene>
    <name type="ordered locus">At3g58960</name>
    <name type="ORF">F17J16.10</name>
</gene>
<proteinExistence type="predicted"/>